<gene>
    <name evidence="1" type="primary">psd</name>
    <name type="ordered locus">SeAg_B4626</name>
</gene>
<dbReference type="EC" id="4.1.1.65" evidence="1"/>
<dbReference type="EMBL" id="CP001138">
    <property type="protein sequence ID" value="ACH48675.1"/>
    <property type="molecule type" value="Genomic_DNA"/>
</dbReference>
<dbReference type="SMR" id="B5F377"/>
<dbReference type="KEGG" id="sea:SeAg_B4626"/>
<dbReference type="HOGENOM" id="CLU_029061_4_1_6"/>
<dbReference type="UniPathway" id="UPA00558">
    <property type="reaction ID" value="UER00616"/>
</dbReference>
<dbReference type="Proteomes" id="UP000008819">
    <property type="component" value="Chromosome"/>
</dbReference>
<dbReference type="GO" id="GO:0005886">
    <property type="term" value="C:plasma membrane"/>
    <property type="evidence" value="ECO:0007669"/>
    <property type="project" value="UniProtKB-SubCell"/>
</dbReference>
<dbReference type="GO" id="GO:0004609">
    <property type="term" value="F:phosphatidylserine decarboxylase activity"/>
    <property type="evidence" value="ECO:0007669"/>
    <property type="project" value="UniProtKB-UniRule"/>
</dbReference>
<dbReference type="GO" id="GO:0006646">
    <property type="term" value="P:phosphatidylethanolamine biosynthetic process"/>
    <property type="evidence" value="ECO:0007669"/>
    <property type="project" value="UniProtKB-UniRule"/>
</dbReference>
<dbReference type="HAMAP" id="MF_00662">
    <property type="entry name" value="PS_decarb_PSD_B_type1"/>
    <property type="match status" value="1"/>
</dbReference>
<dbReference type="InterPro" id="IPR003817">
    <property type="entry name" value="PS_Dcarbxylase"/>
</dbReference>
<dbReference type="InterPro" id="IPR033177">
    <property type="entry name" value="PSD-B"/>
</dbReference>
<dbReference type="InterPro" id="IPR033178">
    <property type="entry name" value="PSD_type1_pro"/>
</dbReference>
<dbReference type="NCBIfam" id="TIGR00163">
    <property type="entry name" value="PS_decarb"/>
    <property type="match status" value="1"/>
</dbReference>
<dbReference type="PANTHER" id="PTHR10067">
    <property type="entry name" value="PHOSPHATIDYLSERINE DECARBOXYLASE"/>
    <property type="match status" value="1"/>
</dbReference>
<dbReference type="PANTHER" id="PTHR10067:SF6">
    <property type="entry name" value="PHOSPHATIDYLSERINE DECARBOXYLASE PROENZYME, MITOCHONDRIAL"/>
    <property type="match status" value="1"/>
</dbReference>
<dbReference type="Pfam" id="PF02666">
    <property type="entry name" value="PS_Dcarbxylase"/>
    <property type="match status" value="1"/>
</dbReference>
<reference key="1">
    <citation type="journal article" date="2011" name="J. Bacteriol.">
        <title>Comparative genomics of 28 Salmonella enterica isolates: evidence for CRISPR-mediated adaptive sublineage evolution.</title>
        <authorList>
            <person name="Fricke W.F."/>
            <person name="Mammel M.K."/>
            <person name="McDermott P.F."/>
            <person name="Tartera C."/>
            <person name="White D.G."/>
            <person name="Leclerc J.E."/>
            <person name="Ravel J."/>
            <person name="Cebula T.A."/>
        </authorList>
    </citation>
    <scope>NUCLEOTIDE SEQUENCE [LARGE SCALE GENOMIC DNA]</scope>
    <source>
        <strain>SL483</strain>
    </source>
</reference>
<comment type="function">
    <text evidence="1">Catalyzes the formation of phosphatidylethanolamine (PtdEtn) from phosphatidylserine (PtdSer).</text>
</comment>
<comment type="catalytic activity">
    <reaction evidence="1">
        <text>a 1,2-diacyl-sn-glycero-3-phospho-L-serine + H(+) = a 1,2-diacyl-sn-glycero-3-phosphoethanolamine + CO2</text>
        <dbReference type="Rhea" id="RHEA:20828"/>
        <dbReference type="ChEBI" id="CHEBI:15378"/>
        <dbReference type="ChEBI" id="CHEBI:16526"/>
        <dbReference type="ChEBI" id="CHEBI:57262"/>
        <dbReference type="ChEBI" id="CHEBI:64612"/>
        <dbReference type="EC" id="4.1.1.65"/>
    </reaction>
</comment>
<comment type="cofactor">
    <cofactor evidence="1">
        <name>pyruvate</name>
        <dbReference type="ChEBI" id="CHEBI:15361"/>
    </cofactor>
    <text evidence="1">Binds 1 pyruvoyl group covalently per subunit.</text>
</comment>
<comment type="pathway">
    <text evidence="1">Phospholipid metabolism; phosphatidylethanolamine biosynthesis; phosphatidylethanolamine from CDP-diacylglycerol: step 2/2.</text>
</comment>
<comment type="subunit">
    <text evidence="1">Heterodimer of a large membrane-associated beta subunit and a small pyruvoyl-containing alpha subunit.</text>
</comment>
<comment type="subcellular location">
    <subcellularLocation>
        <location evidence="1">Cell membrane</location>
        <topology evidence="1">Peripheral membrane protein</topology>
    </subcellularLocation>
</comment>
<comment type="PTM">
    <text evidence="1">Is synthesized initially as an inactive proenzyme. Formation of the active enzyme involves a self-maturation process in which the active site pyruvoyl group is generated from an internal serine residue via an autocatalytic post-translational modification. Two non-identical subunits are generated from the proenzyme in this reaction, and the pyruvate is formed at the N-terminus of the alpha chain, which is derived from the carboxyl end of the proenzyme. The autoendoproteolytic cleavage occurs by a canonical serine protease mechanism, in which the side chain hydroxyl group of the serine supplies its oxygen atom to form the C-terminus of the beta chain, while the remainder of the serine residue undergoes an oxidative deamination to produce ammonia and the pyruvoyl prosthetic group on the alpha chain. During this reaction, the Ser that is part of the protease active site of the proenzyme becomes the pyruvoyl prosthetic group, which constitutes an essential element of the active site of the mature decarboxylase.</text>
</comment>
<comment type="similarity">
    <text evidence="1">Belongs to the phosphatidylserine decarboxylase family. PSD-B subfamily. Prokaryotic type I sub-subfamily.</text>
</comment>
<organism>
    <name type="scientific">Salmonella agona (strain SL483)</name>
    <dbReference type="NCBI Taxonomy" id="454166"/>
    <lineage>
        <taxon>Bacteria</taxon>
        <taxon>Pseudomonadati</taxon>
        <taxon>Pseudomonadota</taxon>
        <taxon>Gammaproteobacteria</taxon>
        <taxon>Enterobacterales</taxon>
        <taxon>Enterobacteriaceae</taxon>
        <taxon>Salmonella</taxon>
    </lineage>
</organism>
<feature type="chain" id="PRO_1000131390" description="Phosphatidylserine decarboxylase beta chain" evidence="1">
    <location>
        <begin position="1"/>
        <end position="253"/>
    </location>
</feature>
<feature type="chain" id="PRO_1000131391" description="Phosphatidylserine decarboxylase alpha chain" evidence="1">
    <location>
        <begin position="254"/>
        <end position="322"/>
    </location>
</feature>
<feature type="region of interest" description="Disordered" evidence="2">
    <location>
        <begin position="295"/>
        <end position="322"/>
    </location>
</feature>
<feature type="compositionally biased region" description="Basic and acidic residues" evidence="2">
    <location>
        <begin position="303"/>
        <end position="322"/>
    </location>
</feature>
<feature type="active site" description="Charge relay system; for autoendoproteolytic cleavage activity" evidence="1">
    <location>
        <position position="90"/>
    </location>
</feature>
<feature type="active site" description="Charge relay system; for autoendoproteolytic cleavage activity" evidence="1">
    <location>
        <position position="147"/>
    </location>
</feature>
<feature type="active site" description="Charge relay system; for autoendoproteolytic cleavage activity" evidence="1">
    <location>
        <position position="254"/>
    </location>
</feature>
<feature type="active site" description="Schiff-base intermediate with substrate; via pyruvic acid; for decarboxylase activity" evidence="1">
    <location>
        <position position="254"/>
    </location>
</feature>
<feature type="site" description="Cleavage (non-hydrolytic); by autocatalysis" evidence="1">
    <location>
        <begin position="253"/>
        <end position="254"/>
    </location>
</feature>
<feature type="modified residue" description="Pyruvic acid (Ser); by autocatalysis" evidence="1">
    <location>
        <position position="254"/>
    </location>
</feature>
<protein>
    <recommendedName>
        <fullName evidence="1">Phosphatidylserine decarboxylase proenzyme</fullName>
        <ecNumber evidence="1">4.1.1.65</ecNumber>
    </recommendedName>
    <component>
        <recommendedName>
            <fullName evidence="1">Phosphatidylserine decarboxylase alpha chain</fullName>
        </recommendedName>
    </component>
    <component>
        <recommendedName>
            <fullName evidence="1">Phosphatidylserine decarboxylase beta chain</fullName>
        </recommendedName>
    </component>
</protein>
<proteinExistence type="inferred from homology"/>
<sequence length="322" mass="35932">MLNSFKLSLQYILPKLWLTRLAGWGASKRAGWLTKLVIDLFVKYYKVDMTEAQKPDTASYRTFNDFFVRPLRDDVRPLNTDPNILVMPADGVISQLGRIEEEKILQAKGHNYSLEALLAGNYLMADKFRNGTFVTTYLSPRDYHRVHMPCNGILREMIYVPGDLFSVNHLTAQNVPNLFARNERVICLFDTEFGPMAQILVGATIVGSIETVWAGTITPPREGIIKRWTWPEGEHEGSVALLKGQEMGRFKLGSTVINLFAPGKVNLIASLASLSVTKIGQPLATSTETFVAPEVEPAPLPTEEIKAEHDASPLVDNKKDDT</sequence>
<evidence type="ECO:0000255" key="1">
    <source>
        <dbReference type="HAMAP-Rule" id="MF_00662"/>
    </source>
</evidence>
<evidence type="ECO:0000256" key="2">
    <source>
        <dbReference type="SAM" id="MobiDB-lite"/>
    </source>
</evidence>
<keyword id="KW-1003">Cell membrane</keyword>
<keyword id="KW-0210">Decarboxylase</keyword>
<keyword id="KW-0444">Lipid biosynthesis</keyword>
<keyword id="KW-0443">Lipid metabolism</keyword>
<keyword id="KW-0456">Lyase</keyword>
<keyword id="KW-0472">Membrane</keyword>
<keyword id="KW-0594">Phospholipid biosynthesis</keyword>
<keyword id="KW-1208">Phospholipid metabolism</keyword>
<keyword id="KW-0670">Pyruvate</keyword>
<keyword id="KW-0865">Zymogen</keyword>
<accession>B5F377</accession>
<name>PSD_SALA4</name>